<gene>
    <name type="primary">mshC</name>
    <name type="synonym">cysS2</name>
    <name type="ordered locus">MAP_1876c</name>
</gene>
<proteinExistence type="inferred from homology"/>
<dbReference type="EC" id="6.3.1.13"/>
<dbReference type="EMBL" id="AE016958">
    <property type="protein sequence ID" value="AAS04193.1"/>
    <property type="molecule type" value="Genomic_DNA"/>
</dbReference>
<dbReference type="RefSeq" id="WP_010949394.1">
    <property type="nucleotide sequence ID" value="NZ_CP106873.1"/>
</dbReference>
<dbReference type="SMR" id="Q73YS9"/>
<dbReference type="STRING" id="262316.MAP_1876c"/>
<dbReference type="KEGG" id="mpa:MAP_1876c"/>
<dbReference type="PATRIC" id="fig|262316.17.peg.1987"/>
<dbReference type="eggNOG" id="COG0215">
    <property type="taxonomic scope" value="Bacteria"/>
</dbReference>
<dbReference type="HOGENOM" id="CLU_013528_0_0_11"/>
<dbReference type="Proteomes" id="UP000000580">
    <property type="component" value="Chromosome"/>
</dbReference>
<dbReference type="GO" id="GO:0005829">
    <property type="term" value="C:cytosol"/>
    <property type="evidence" value="ECO:0007669"/>
    <property type="project" value="TreeGrafter"/>
</dbReference>
<dbReference type="GO" id="GO:0005524">
    <property type="term" value="F:ATP binding"/>
    <property type="evidence" value="ECO:0007669"/>
    <property type="project" value="UniProtKB-KW"/>
</dbReference>
<dbReference type="GO" id="GO:0035446">
    <property type="term" value="F:cysteine-glucosaminylinositol ligase activity"/>
    <property type="evidence" value="ECO:0007669"/>
    <property type="project" value="UniProtKB-UniRule"/>
</dbReference>
<dbReference type="GO" id="GO:0004817">
    <property type="term" value="F:cysteine-tRNA ligase activity"/>
    <property type="evidence" value="ECO:0007669"/>
    <property type="project" value="TreeGrafter"/>
</dbReference>
<dbReference type="GO" id="GO:0008270">
    <property type="term" value="F:zinc ion binding"/>
    <property type="evidence" value="ECO:0007669"/>
    <property type="project" value="UniProtKB-UniRule"/>
</dbReference>
<dbReference type="GO" id="GO:0006423">
    <property type="term" value="P:cysteinyl-tRNA aminoacylation"/>
    <property type="evidence" value="ECO:0007669"/>
    <property type="project" value="TreeGrafter"/>
</dbReference>
<dbReference type="GO" id="GO:0010125">
    <property type="term" value="P:mycothiol biosynthetic process"/>
    <property type="evidence" value="ECO:0007669"/>
    <property type="project" value="UniProtKB-UniRule"/>
</dbReference>
<dbReference type="CDD" id="cd07955">
    <property type="entry name" value="Anticodon_Ia_Cys_like"/>
    <property type="match status" value="1"/>
</dbReference>
<dbReference type="CDD" id="cd00672">
    <property type="entry name" value="CysRS_core"/>
    <property type="match status" value="1"/>
</dbReference>
<dbReference type="FunFam" id="3.40.50.620:FF:000134">
    <property type="entry name" value="L-cysteine:1D-myo-inositol 2-amino-2-deoxy-alpha-D-glucopyranoside ligase"/>
    <property type="match status" value="1"/>
</dbReference>
<dbReference type="Gene3D" id="1.20.120.640">
    <property type="entry name" value="Anticodon-binding domain of a subclass of class I aminoacyl-tRNA synthetases"/>
    <property type="match status" value="1"/>
</dbReference>
<dbReference type="Gene3D" id="3.40.50.620">
    <property type="entry name" value="HUPs"/>
    <property type="match status" value="1"/>
</dbReference>
<dbReference type="HAMAP" id="MF_01697">
    <property type="entry name" value="MshC"/>
    <property type="match status" value="1"/>
</dbReference>
<dbReference type="InterPro" id="IPR024909">
    <property type="entry name" value="Cys-tRNA/MSH_ligase"/>
</dbReference>
<dbReference type="InterPro" id="IPR017812">
    <property type="entry name" value="Mycothiol_ligase_MshC"/>
</dbReference>
<dbReference type="InterPro" id="IPR014729">
    <property type="entry name" value="Rossmann-like_a/b/a_fold"/>
</dbReference>
<dbReference type="InterPro" id="IPR032678">
    <property type="entry name" value="tRNA-synt_1_cat_dom"/>
</dbReference>
<dbReference type="InterPro" id="IPR009080">
    <property type="entry name" value="tRNAsynth_Ia_anticodon-bd"/>
</dbReference>
<dbReference type="NCBIfam" id="TIGR03447">
    <property type="entry name" value="mycothiol_MshC"/>
    <property type="match status" value="1"/>
</dbReference>
<dbReference type="PANTHER" id="PTHR10890:SF3">
    <property type="entry name" value="CYSTEINE--TRNA LIGASE, CYTOPLASMIC"/>
    <property type="match status" value="1"/>
</dbReference>
<dbReference type="PANTHER" id="PTHR10890">
    <property type="entry name" value="CYSTEINYL-TRNA SYNTHETASE"/>
    <property type="match status" value="1"/>
</dbReference>
<dbReference type="Pfam" id="PF01406">
    <property type="entry name" value="tRNA-synt_1e"/>
    <property type="match status" value="1"/>
</dbReference>
<dbReference type="PRINTS" id="PR00983">
    <property type="entry name" value="TRNASYNTHCYS"/>
</dbReference>
<dbReference type="SUPFAM" id="SSF47323">
    <property type="entry name" value="Anticodon-binding domain of a subclass of class I aminoacyl-tRNA synthetases"/>
    <property type="match status" value="1"/>
</dbReference>
<dbReference type="SUPFAM" id="SSF52374">
    <property type="entry name" value="Nucleotidylyl transferase"/>
    <property type="match status" value="1"/>
</dbReference>
<organism>
    <name type="scientific">Mycolicibacterium paratuberculosis (strain ATCC BAA-968 / K-10)</name>
    <name type="common">Mycobacterium paratuberculosis</name>
    <dbReference type="NCBI Taxonomy" id="262316"/>
    <lineage>
        <taxon>Bacteria</taxon>
        <taxon>Bacillati</taxon>
        <taxon>Actinomycetota</taxon>
        <taxon>Actinomycetes</taxon>
        <taxon>Mycobacteriales</taxon>
        <taxon>Mycobacteriaceae</taxon>
        <taxon>Mycobacterium</taxon>
        <taxon>Mycobacterium avium complex (MAC)</taxon>
    </lineage>
</organism>
<comment type="function">
    <text evidence="1">Catalyzes the ATP-dependent condensation of GlcN-Ins and L-cysteine to form L-Cys-GlcN-Ins.</text>
</comment>
<comment type="catalytic activity">
    <reaction>
        <text>1D-myo-inositol 2-amino-2-deoxy-alpha-D-glucopyranoside + L-cysteine + ATP = 1D-myo-inositol 2-(L-cysteinylamino)-2-deoxy-alpha-D-glucopyranoside + AMP + diphosphate + H(+)</text>
        <dbReference type="Rhea" id="RHEA:26176"/>
        <dbReference type="ChEBI" id="CHEBI:15378"/>
        <dbReference type="ChEBI" id="CHEBI:30616"/>
        <dbReference type="ChEBI" id="CHEBI:33019"/>
        <dbReference type="ChEBI" id="CHEBI:35235"/>
        <dbReference type="ChEBI" id="CHEBI:58886"/>
        <dbReference type="ChEBI" id="CHEBI:58887"/>
        <dbReference type="ChEBI" id="CHEBI:456215"/>
        <dbReference type="EC" id="6.3.1.13"/>
    </reaction>
</comment>
<comment type="cofactor">
    <cofactor evidence="1">
        <name>Zn(2+)</name>
        <dbReference type="ChEBI" id="CHEBI:29105"/>
    </cofactor>
    <text evidence="1">Binds 1 zinc ion per subunit.</text>
</comment>
<comment type="subunit">
    <text evidence="1">Monomer.</text>
</comment>
<comment type="similarity">
    <text evidence="2">Belongs to the class-I aminoacyl-tRNA synthetase family. MshC subfamily.</text>
</comment>
<protein>
    <recommendedName>
        <fullName>L-cysteine:1D-myo-inositol 2-amino-2-deoxy-alpha-D-glucopyranoside ligase</fullName>
        <shortName>L-Cys:GlcN-Ins ligase</shortName>
        <ecNumber>6.3.1.13</ecNumber>
    </recommendedName>
    <alternativeName>
        <fullName>Mycothiol ligase</fullName>
        <shortName>MSH ligase</shortName>
    </alternativeName>
</protein>
<evidence type="ECO:0000250" key="1"/>
<evidence type="ECO:0000305" key="2"/>
<name>MSHC_MYCPA</name>
<accession>Q73YS9</accession>
<sequence>MRSWSSPQVPQLPGRGPELRLYDTSDRQVRPVAAGAGPGSAATMYVCGITPYDATHLGHAATYLAFDLIYRQWLDLGHDVHYVQNVTDVDDPLLERAARDGVDWRALAEREVSLFREDMAALRILAPRDYVGATEAIADVVELVEKMLASGAAYVVDGEFPDIYYRADATLQFGYESGYDRETMLRLFAERGGDPQRPGKTDALDALLWRAARPGEPSWPSPFGNGRPGWHVECAAIALSRIGSGLDIQGGGSDLIFPHHEFTAAHAECVRGERRFARHYVHAGMIGWDGHKMSKSRGNLVLVSQLRGRGVEPAAIRLGLLAGHYRGDRYWSDQVLDEATARLRRWRTATALPAGPDATDVIARVRQYLADDLNTPKALAALDGWTTDALDYGGHDTAAPRLVASAVDALLGVAL</sequence>
<feature type="chain" id="PRO_0000159440" description="L-cysteine:1D-myo-inositol 2-amino-2-deoxy-alpha-D-glucopyranoside ligase">
    <location>
        <begin position="1"/>
        <end position="415"/>
    </location>
</feature>
<feature type="short sequence motif" description="'HIGH' region">
    <location>
        <begin position="49"/>
        <end position="59"/>
    </location>
</feature>
<feature type="short sequence motif" description="'ERGGDP' region">
    <location>
        <begin position="190"/>
        <end position="195"/>
    </location>
</feature>
<feature type="short sequence motif" description="'KMSKS' region">
    <location>
        <begin position="292"/>
        <end position="296"/>
    </location>
</feature>
<feature type="binding site" evidence="1">
    <location>
        <begin position="47"/>
        <end position="50"/>
    </location>
    <ligand>
        <name>L-cysteinyl-5'-AMP</name>
        <dbReference type="ChEBI" id="CHEBI:144924"/>
    </ligand>
</feature>
<feature type="binding site" evidence="1">
    <location>
        <position position="47"/>
    </location>
    <ligand>
        <name>Zn(2+)</name>
        <dbReference type="ChEBI" id="CHEBI:29105"/>
    </ligand>
</feature>
<feature type="binding site" evidence="1">
    <location>
        <position position="62"/>
    </location>
    <ligand>
        <name>L-cysteinyl-5'-AMP</name>
        <dbReference type="ChEBI" id="CHEBI:144924"/>
    </ligand>
</feature>
<feature type="binding site" evidence="1">
    <location>
        <begin position="85"/>
        <end position="87"/>
    </location>
    <ligand>
        <name>L-cysteinyl-5'-AMP</name>
        <dbReference type="ChEBI" id="CHEBI:144924"/>
    </ligand>
</feature>
<feature type="binding site" evidence="1">
    <location>
        <position position="230"/>
    </location>
    <ligand>
        <name>L-cysteinyl-5'-AMP</name>
        <dbReference type="ChEBI" id="CHEBI:144924"/>
    </ligand>
</feature>
<feature type="binding site" evidence="1">
    <location>
        <position position="234"/>
    </location>
    <ligand>
        <name>Zn(2+)</name>
        <dbReference type="ChEBI" id="CHEBI:29105"/>
    </ligand>
</feature>
<feature type="binding site" evidence="1">
    <location>
        <begin position="252"/>
        <end position="254"/>
    </location>
    <ligand>
        <name>L-cysteinyl-5'-AMP</name>
        <dbReference type="ChEBI" id="CHEBI:144924"/>
    </ligand>
</feature>
<feature type="binding site" evidence="1">
    <location>
        <position position="259"/>
    </location>
    <ligand>
        <name>Zn(2+)</name>
        <dbReference type="ChEBI" id="CHEBI:29105"/>
    </ligand>
</feature>
<feature type="binding site" evidence="1">
    <location>
        <position position="286"/>
    </location>
    <ligand>
        <name>L-cysteinyl-5'-AMP</name>
        <dbReference type="ChEBI" id="CHEBI:144924"/>
    </ligand>
</feature>
<keyword id="KW-0067">ATP-binding</keyword>
<keyword id="KW-0436">Ligase</keyword>
<keyword id="KW-0479">Metal-binding</keyword>
<keyword id="KW-0547">Nucleotide-binding</keyword>
<keyword id="KW-1185">Reference proteome</keyword>
<keyword id="KW-0862">Zinc</keyword>
<reference key="1">
    <citation type="journal article" date="2005" name="Proc. Natl. Acad. Sci. U.S.A.">
        <title>The complete genome sequence of Mycobacterium avium subspecies paratuberculosis.</title>
        <authorList>
            <person name="Li L."/>
            <person name="Bannantine J.P."/>
            <person name="Zhang Q."/>
            <person name="Amonsin A."/>
            <person name="May B.J."/>
            <person name="Alt D."/>
            <person name="Banerji N."/>
            <person name="Kanjilal S."/>
            <person name="Kapur V."/>
        </authorList>
    </citation>
    <scope>NUCLEOTIDE SEQUENCE [LARGE SCALE GENOMIC DNA]</scope>
    <source>
        <strain>ATCC BAA-968 / K-10</strain>
    </source>
</reference>